<evidence type="ECO:0000250" key="1">
    <source>
        <dbReference type="UniProtKB" id="Q969J3"/>
    </source>
</evidence>
<evidence type="ECO:0000256" key="2">
    <source>
        <dbReference type="SAM" id="MobiDB-lite"/>
    </source>
</evidence>
<evidence type="ECO:0000305" key="3"/>
<evidence type="ECO:0000312" key="4">
    <source>
        <dbReference type="MGI" id="MGI:1915024"/>
    </source>
</evidence>
<evidence type="ECO:0007744" key="5">
    <source>
    </source>
</evidence>
<accession>Q9D920</accession>
<accession>Q8BJB0</accession>
<proteinExistence type="evidence at protein level"/>
<organism>
    <name type="scientific">Mus musculus</name>
    <name type="common">Mouse</name>
    <dbReference type="NCBI Taxonomy" id="10090"/>
    <lineage>
        <taxon>Eukaryota</taxon>
        <taxon>Metazoa</taxon>
        <taxon>Chordata</taxon>
        <taxon>Craniata</taxon>
        <taxon>Vertebrata</taxon>
        <taxon>Euteleostomi</taxon>
        <taxon>Mammalia</taxon>
        <taxon>Eutheria</taxon>
        <taxon>Euarchontoglires</taxon>
        <taxon>Glires</taxon>
        <taxon>Rodentia</taxon>
        <taxon>Myomorpha</taxon>
        <taxon>Muroidea</taxon>
        <taxon>Muridae</taxon>
        <taxon>Murinae</taxon>
        <taxon>Mus</taxon>
        <taxon>Mus</taxon>
    </lineage>
</organism>
<name>BORC5_MOUSE</name>
<protein>
    <recommendedName>
        <fullName evidence="3">BLOC-1-related complex subunit 5</fullName>
    </recommendedName>
</protein>
<comment type="function">
    <text evidence="1">As part of the BORC complex may play a role in lysosomes movement and localization at the cell periphery. Associated with the cytosolic face of lysosomes, the BORC complex may recruit ARL8B and couple lysosomes to microtubule plus-end-directed kinesin motor. Thereby, it may indirectly play a role in cell spreading and motility.</text>
</comment>
<comment type="subunit">
    <text evidence="1">Component of the BLOC-one-related complex (BORC) which is composed of BLOC1S1, BLOC1S2, BORCS5, BORCS6, BORCS7, BORCS8, KXD1 and SNAPIN. Interacts with ARL8B, KIF5A, KLC1 and PLEKHM2; links the lysosomal BORC complex to the microtubule plus-end-directed kinesin motor.</text>
</comment>
<comment type="subcellular location">
    <subcellularLocation>
        <location evidence="1">Lysosome membrane</location>
        <topology evidence="1">Lipid-anchor</topology>
        <orientation evidence="1">Cytoplasmic side</orientation>
    </subcellularLocation>
</comment>
<comment type="PTM">
    <text evidence="1">Myristoylation at Gly-2 mediates attachment to lysosome membranes.</text>
</comment>
<comment type="similarity">
    <text evidence="3">Belongs to the BORCS5 family.</text>
</comment>
<gene>
    <name evidence="4" type="primary">Borcs5</name>
</gene>
<reference key="1">
    <citation type="journal article" date="2005" name="Science">
        <title>The transcriptional landscape of the mammalian genome.</title>
        <authorList>
            <person name="Carninci P."/>
            <person name="Kasukawa T."/>
            <person name="Katayama S."/>
            <person name="Gough J."/>
            <person name="Frith M.C."/>
            <person name="Maeda N."/>
            <person name="Oyama R."/>
            <person name="Ravasi T."/>
            <person name="Lenhard B."/>
            <person name="Wells C."/>
            <person name="Kodzius R."/>
            <person name="Shimokawa K."/>
            <person name="Bajic V.B."/>
            <person name="Brenner S.E."/>
            <person name="Batalov S."/>
            <person name="Forrest A.R."/>
            <person name="Zavolan M."/>
            <person name="Davis M.J."/>
            <person name="Wilming L.G."/>
            <person name="Aidinis V."/>
            <person name="Allen J.E."/>
            <person name="Ambesi-Impiombato A."/>
            <person name="Apweiler R."/>
            <person name="Aturaliya R.N."/>
            <person name="Bailey T.L."/>
            <person name="Bansal M."/>
            <person name="Baxter L."/>
            <person name="Beisel K.W."/>
            <person name="Bersano T."/>
            <person name="Bono H."/>
            <person name="Chalk A.M."/>
            <person name="Chiu K.P."/>
            <person name="Choudhary V."/>
            <person name="Christoffels A."/>
            <person name="Clutterbuck D.R."/>
            <person name="Crowe M.L."/>
            <person name="Dalla E."/>
            <person name="Dalrymple B.P."/>
            <person name="de Bono B."/>
            <person name="Della Gatta G."/>
            <person name="di Bernardo D."/>
            <person name="Down T."/>
            <person name="Engstrom P."/>
            <person name="Fagiolini M."/>
            <person name="Faulkner G."/>
            <person name="Fletcher C.F."/>
            <person name="Fukushima T."/>
            <person name="Furuno M."/>
            <person name="Futaki S."/>
            <person name="Gariboldi M."/>
            <person name="Georgii-Hemming P."/>
            <person name="Gingeras T.R."/>
            <person name="Gojobori T."/>
            <person name="Green R.E."/>
            <person name="Gustincich S."/>
            <person name="Harbers M."/>
            <person name="Hayashi Y."/>
            <person name="Hensch T.K."/>
            <person name="Hirokawa N."/>
            <person name="Hill D."/>
            <person name="Huminiecki L."/>
            <person name="Iacono M."/>
            <person name="Ikeo K."/>
            <person name="Iwama A."/>
            <person name="Ishikawa T."/>
            <person name="Jakt M."/>
            <person name="Kanapin A."/>
            <person name="Katoh M."/>
            <person name="Kawasawa Y."/>
            <person name="Kelso J."/>
            <person name="Kitamura H."/>
            <person name="Kitano H."/>
            <person name="Kollias G."/>
            <person name="Krishnan S.P."/>
            <person name="Kruger A."/>
            <person name="Kummerfeld S.K."/>
            <person name="Kurochkin I.V."/>
            <person name="Lareau L.F."/>
            <person name="Lazarevic D."/>
            <person name="Lipovich L."/>
            <person name="Liu J."/>
            <person name="Liuni S."/>
            <person name="McWilliam S."/>
            <person name="Madan Babu M."/>
            <person name="Madera M."/>
            <person name="Marchionni L."/>
            <person name="Matsuda H."/>
            <person name="Matsuzawa S."/>
            <person name="Miki H."/>
            <person name="Mignone F."/>
            <person name="Miyake S."/>
            <person name="Morris K."/>
            <person name="Mottagui-Tabar S."/>
            <person name="Mulder N."/>
            <person name="Nakano N."/>
            <person name="Nakauchi H."/>
            <person name="Ng P."/>
            <person name="Nilsson R."/>
            <person name="Nishiguchi S."/>
            <person name="Nishikawa S."/>
            <person name="Nori F."/>
            <person name="Ohara O."/>
            <person name="Okazaki Y."/>
            <person name="Orlando V."/>
            <person name="Pang K.C."/>
            <person name="Pavan W.J."/>
            <person name="Pavesi G."/>
            <person name="Pesole G."/>
            <person name="Petrovsky N."/>
            <person name="Piazza S."/>
            <person name="Reed J."/>
            <person name="Reid J.F."/>
            <person name="Ring B.Z."/>
            <person name="Ringwald M."/>
            <person name="Rost B."/>
            <person name="Ruan Y."/>
            <person name="Salzberg S.L."/>
            <person name="Sandelin A."/>
            <person name="Schneider C."/>
            <person name="Schoenbach C."/>
            <person name="Sekiguchi K."/>
            <person name="Semple C.A."/>
            <person name="Seno S."/>
            <person name="Sessa L."/>
            <person name="Sheng Y."/>
            <person name="Shibata Y."/>
            <person name="Shimada H."/>
            <person name="Shimada K."/>
            <person name="Silva D."/>
            <person name="Sinclair B."/>
            <person name="Sperling S."/>
            <person name="Stupka E."/>
            <person name="Sugiura K."/>
            <person name="Sultana R."/>
            <person name="Takenaka Y."/>
            <person name="Taki K."/>
            <person name="Tammoja K."/>
            <person name="Tan S.L."/>
            <person name="Tang S."/>
            <person name="Taylor M.S."/>
            <person name="Tegner J."/>
            <person name="Teichmann S.A."/>
            <person name="Ueda H.R."/>
            <person name="van Nimwegen E."/>
            <person name="Verardo R."/>
            <person name="Wei C.L."/>
            <person name="Yagi K."/>
            <person name="Yamanishi H."/>
            <person name="Zabarovsky E."/>
            <person name="Zhu S."/>
            <person name="Zimmer A."/>
            <person name="Hide W."/>
            <person name="Bult C."/>
            <person name="Grimmond S.M."/>
            <person name="Teasdale R.D."/>
            <person name="Liu E.T."/>
            <person name="Brusic V."/>
            <person name="Quackenbush J."/>
            <person name="Wahlestedt C."/>
            <person name="Mattick J.S."/>
            <person name="Hume D.A."/>
            <person name="Kai C."/>
            <person name="Sasaki D."/>
            <person name="Tomaru Y."/>
            <person name="Fukuda S."/>
            <person name="Kanamori-Katayama M."/>
            <person name="Suzuki M."/>
            <person name="Aoki J."/>
            <person name="Arakawa T."/>
            <person name="Iida J."/>
            <person name="Imamura K."/>
            <person name="Itoh M."/>
            <person name="Kato T."/>
            <person name="Kawaji H."/>
            <person name="Kawagashira N."/>
            <person name="Kawashima T."/>
            <person name="Kojima M."/>
            <person name="Kondo S."/>
            <person name="Konno H."/>
            <person name="Nakano K."/>
            <person name="Ninomiya N."/>
            <person name="Nishio T."/>
            <person name="Okada M."/>
            <person name="Plessy C."/>
            <person name="Shibata K."/>
            <person name="Shiraki T."/>
            <person name="Suzuki S."/>
            <person name="Tagami M."/>
            <person name="Waki K."/>
            <person name="Watahiki A."/>
            <person name="Okamura-Oho Y."/>
            <person name="Suzuki H."/>
            <person name="Kawai J."/>
            <person name="Hayashizaki Y."/>
        </authorList>
    </citation>
    <scope>NUCLEOTIDE SEQUENCE [LARGE SCALE MRNA]</scope>
    <source>
        <strain>C57BL/6J</strain>
        <strain>NOD</strain>
        <tissue>Bone marrow</tissue>
        <tissue>Pancreas</tissue>
        <tissue>Spleen</tissue>
        <tissue>Thymus</tissue>
    </source>
</reference>
<reference key="2">
    <citation type="journal article" date="2004" name="Genome Res.">
        <title>The status, quality, and expansion of the NIH full-length cDNA project: the Mammalian Gene Collection (MGC).</title>
        <authorList>
            <consortium name="The MGC Project Team"/>
        </authorList>
    </citation>
    <scope>NUCLEOTIDE SEQUENCE [LARGE SCALE MRNA]</scope>
    <source>
        <strain>FVB/N</strain>
        <tissue>Mammary tumor</tissue>
    </source>
</reference>
<reference key="3">
    <citation type="journal article" date="2010" name="Cell">
        <title>A tissue-specific atlas of mouse protein phosphorylation and expression.</title>
        <authorList>
            <person name="Huttlin E.L."/>
            <person name="Jedrychowski M.P."/>
            <person name="Elias J.E."/>
            <person name="Goswami T."/>
            <person name="Rad R."/>
            <person name="Beausoleil S.A."/>
            <person name="Villen J."/>
            <person name="Haas W."/>
            <person name="Sowa M.E."/>
            <person name="Gygi S.P."/>
        </authorList>
    </citation>
    <scope>PHOSPHORYLATION [LARGE SCALE ANALYSIS] AT SER-71</scope>
    <scope>IDENTIFICATION BY MASS SPECTROMETRY [LARGE SCALE ANALYSIS]</scope>
    <source>
        <tissue>Brain</tissue>
        <tissue>Kidney</tissue>
        <tissue>Liver</tissue>
        <tissue>Lung</tissue>
        <tissue>Testis</tissue>
    </source>
</reference>
<keyword id="KW-0449">Lipoprotein</keyword>
<keyword id="KW-0458">Lysosome</keyword>
<keyword id="KW-0472">Membrane</keyword>
<keyword id="KW-0519">Myristate</keyword>
<keyword id="KW-0597">Phosphoprotein</keyword>
<keyword id="KW-1185">Reference proteome</keyword>
<sequence length="195" mass="22120">MGSEQSAEAESRPGDLNASVTPSPAKHRAKMDDIVVVAQGSQASRNVSNDPDVIKLQEIPTFQPLLKGLLSGQTSPTNAKLEKLDSQQVLQLCLRYQDHLHQCAEAVAFDQNALVKRIKEMDLSVETLFCFMQERQKRYAKYAEQIQKVNEMSAILRRIQMGIDQTVPLMERLNSMLPEAERLEPFSMKPERERH</sequence>
<feature type="initiator methionine" description="Removed" evidence="1">
    <location>
        <position position="1"/>
    </location>
</feature>
<feature type="chain" id="PRO_0000318597" description="BLOC-1-related complex subunit 5">
    <location>
        <begin position="2"/>
        <end position="195"/>
    </location>
</feature>
<feature type="region of interest" description="Disordered" evidence="2">
    <location>
        <begin position="1"/>
        <end position="31"/>
    </location>
</feature>
<feature type="modified residue" description="Phosphoserine" evidence="5">
    <location>
        <position position="71"/>
    </location>
</feature>
<feature type="modified residue" description="Phosphoserine" evidence="1">
    <location>
        <position position="75"/>
    </location>
</feature>
<feature type="lipid moiety-binding region" description="N-myristoyl glycine" evidence="1">
    <location>
        <position position="2"/>
    </location>
</feature>
<feature type="sequence conflict" description="In Ref. 1; BAC40938." evidence="3" ref="1">
    <original>E</original>
    <variation>K</variation>
    <location>
        <position position="58"/>
    </location>
</feature>
<dbReference type="EMBL" id="AK007423">
    <property type="protein sequence ID" value="BAB25030.1"/>
    <property type="molecule type" value="mRNA"/>
</dbReference>
<dbReference type="EMBL" id="AK089648">
    <property type="protein sequence ID" value="BAC40938.1"/>
    <property type="molecule type" value="mRNA"/>
</dbReference>
<dbReference type="EMBL" id="AK151342">
    <property type="protein sequence ID" value="BAE30320.1"/>
    <property type="molecule type" value="mRNA"/>
</dbReference>
<dbReference type="EMBL" id="AK169615">
    <property type="protein sequence ID" value="BAE41262.1"/>
    <property type="molecule type" value="mRNA"/>
</dbReference>
<dbReference type="EMBL" id="BC023059">
    <property type="protein sequence ID" value="AAH23059.1"/>
    <property type="molecule type" value="mRNA"/>
</dbReference>
<dbReference type="CCDS" id="CCDS20638.1"/>
<dbReference type="RefSeq" id="NP_001163950.1">
    <property type="nucleotide sequence ID" value="NM_001170479.1"/>
</dbReference>
<dbReference type="RefSeq" id="NP_080647.2">
    <property type="nucleotide sequence ID" value="NM_026371.3"/>
</dbReference>
<dbReference type="SMR" id="Q9D920"/>
<dbReference type="BioGRID" id="212434">
    <property type="interactions" value="4"/>
</dbReference>
<dbReference type="ComplexPortal" id="CPX-5061">
    <property type="entry name" value="BORC complex"/>
</dbReference>
<dbReference type="FunCoup" id="Q9D920">
    <property type="interactions" value="1832"/>
</dbReference>
<dbReference type="STRING" id="10090.ENSMUSP00000127413"/>
<dbReference type="GlyGen" id="Q9D920">
    <property type="glycosylation" value="1 site"/>
</dbReference>
<dbReference type="iPTMnet" id="Q9D920"/>
<dbReference type="PhosphoSitePlus" id="Q9D920"/>
<dbReference type="PaxDb" id="10090-ENSMUSP00000054913"/>
<dbReference type="ProteomicsDB" id="273695"/>
<dbReference type="Pumba" id="Q9D920"/>
<dbReference type="Antibodypedia" id="23482">
    <property type="antibodies" value="153 antibodies from 21 providers"/>
</dbReference>
<dbReference type="DNASU" id="67774"/>
<dbReference type="Ensembl" id="ENSMUST00000062755.10">
    <property type="protein sequence ID" value="ENSMUSP00000054913.9"/>
    <property type="gene ID" value="ENSMUSG00000042992.16"/>
</dbReference>
<dbReference type="GeneID" id="67774"/>
<dbReference type="KEGG" id="mmu:67774"/>
<dbReference type="UCSC" id="uc012eul.1">
    <property type="organism name" value="mouse"/>
</dbReference>
<dbReference type="AGR" id="MGI:1915024"/>
<dbReference type="CTD" id="118426"/>
<dbReference type="MGI" id="MGI:1915024">
    <property type="gene designation" value="Borcs5"/>
</dbReference>
<dbReference type="VEuPathDB" id="HostDB:ENSMUSG00000042992"/>
<dbReference type="eggNOG" id="KOG4515">
    <property type="taxonomic scope" value="Eukaryota"/>
</dbReference>
<dbReference type="GeneTree" id="ENSGT00390000015016"/>
<dbReference type="HOGENOM" id="CLU_064176_1_0_1"/>
<dbReference type="InParanoid" id="Q9D920"/>
<dbReference type="OMA" id="EGRPHDP"/>
<dbReference type="OrthoDB" id="10035640at2759"/>
<dbReference type="TreeFam" id="TF316379"/>
<dbReference type="BioGRID-ORCS" id="67774">
    <property type="hits" value="2 hits in 45 CRISPR screens"/>
</dbReference>
<dbReference type="ChiTaRS" id="Borcs5">
    <property type="organism name" value="mouse"/>
</dbReference>
<dbReference type="PRO" id="PR:Q9D920"/>
<dbReference type="Proteomes" id="UP000000589">
    <property type="component" value="Chromosome 6"/>
</dbReference>
<dbReference type="RNAct" id="Q9D920">
    <property type="molecule type" value="protein"/>
</dbReference>
<dbReference type="Bgee" id="ENSMUSG00000042992">
    <property type="expression patterns" value="Expressed in animal zygote and 246 other cell types or tissues"/>
</dbReference>
<dbReference type="ExpressionAtlas" id="Q9D920">
    <property type="expression patterns" value="baseline and differential"/>
</dbReference>
<dbReference type="GO" id="GO:0030424">
    <property type="term" value="C:axon"/>
    <property type="evidence" value="ECO:0000315"/>
    <property type="project" value="MGI"/>
</dbReference>
<dbReference type="GO" id="GO:0099078">
    <property type="term" value="C:BORC complex"/>
    <property type="evidence" value="ECO:0000250"/>
    <property type="project" value="UniProtKB"/>
</dbReference>
<dbReference type="GO" id="GO:0098574">
    <property type="term" value="C:cytoplasmic side of lysosomal membrane"/>
    <property type="evidence" value="ECO:0000250"/>
    <property type="project" value="UniProtKB"/>
</dbReference>
<dbReference type="GO" id="GO:0005764">
    <property type="term" value="C:lysosome"/>
    <property type="evidence" value="ECO:0000315"/>
    <property type="project" value="MGI"/>
</dbReference>
<dbReference type="GO" id="GO:0016020">
    <property type="term" value="C:membrane"/>
    <property type="evidence" value="ECO:0000250"/>
    <property type="project" value="UniProtKB"/>
</dbReference>
<dbReference type="GO" id="GO:0005886">
    <property type="term" value="C:plasma membrane"/>
    <property type="evidence" value="ECO:0007669"/>
    <property type="project" value="Ensembl"/>
</dbReference>
<dbReference type="GO" id="GO:0005873">
    <property type="term" value="C:plus-end kinesin complex"/>
    <property type="evidence" value="ECO:0007669"/>
    <property type="project" value="Ensembl"/>
</dbReference>
<dbReference type="GO" id="GO:0032418">
    <property type="term" value="P:lysosome localization"/>
    <property type="evidence" value="ECO:0000250"/>
    <property type="project" value="UniProtKB"/>
</dbReference>
<dbReference type="GO" id="GO:0007399">
    <property type="term" value="P:nervous system development"/>
    <property type="evidence" value="ECO:0000315"/>
    <property type="project" value="MGI"/>
</dbReference>
<dbReference type="GO" id="GO:0072384">
    <property type="term" value="P:organelle transport along microtubule"/>
    <property type="evidence" value="ECO:0000315"/>
    <property type="project" value="MGI"/>
</dbReference>
<dbReference type="GO" id="GO:0051036">
    <property type="term" value="P:regulation of endosome size"/>
    <property type="evidence" value="ECO:0000303"/>
    <property type="project" value="ComplexPortal"/>
</dbReference>
<dbReference type="GO" id="GO:0062196">
    <property type="term" value="P:regulation of lysosome size"/>
    <property type="evidence" value="ECO:0000303"/>
    <property type="project" value="ComplexPortal"/>
</dbReference>
<dbReference type="CDD" id="cd22789">
    <property type="entry name" value="BORCS5-like"/>
    <property type="match status" value="1"/>
</dbReference>
<dbReference type="InterPro" id="IPR018780">
    <property type="entry name" value="TBORCS5"/>
</dbReference>
<dbReference type="PANTHER" id="PTHR31634">
    <property type="entry name" value="BLOC-1-RELATED COMPLEX SUBUNIT 5"/>
    <property type="match status" value="1"/>
</dbReference>
<dbReference type="PANTHER" id="PTHR31634:SF2">
    <property type="entry name" value="BLOC-1-RELATED COMPLEX SUBUNIT 5"/>
    <property type="match status" value="1"/>
</dbReference>
<dbReference type="Pfam" id="PF10158">
    <property type="entry name" value="LOH1CR12"/>
    <property type="match status" value="1"/>
</dbReference>